<feature type="chain" id="PRO_1000049115" description="Homoserine kinase">
    <location>
        <begin position="1"/>
        <end position="292"/>
    </location>
</feature>
<feature type="binding site" evidence="1">
    <location>
        <begin position="84"/>
        <end position="94"/>
    </location>
    <ligand>
        <name>ATP</name>
        <dbReference type="ChEBI" id="CHEBI:30616"/>
    </ligand>
</feature>
<dbReference type="EC" id="2.7.1.39" evidence="1"/>
<dbReference type="EMBL" id="CP000776">
    <property type="protein sequence ID" value="ABS52501.1"/>
    <property type="molecule type" value="Genomic_DNA"/>
</dbReference>
<dbReference type="RefSeq" id="WP_012109499.1">
    <property type="nucleotide sequence ID" value="NC_009714.1"/>
</dbReference>
<dbReference type="SMR" id="A7I3V2"/>
<dbReference type="STRING" id="360107.CHAB381_1681"/>
<dbReference type="KEGG" id="cha:CHAB381_1681"/>
<dbReference type="eggNOG" id="COG0083">
    <property type="taxonomic scope" value="Bacteria"/>
</dbReference>
<dbReference type="HOGENOM" id="CLU_041243_0_0_7"/>
<dbReference type="OrthoDB" id="9769912at2"/>
<dbReference type="UniPathway" id="UPA00050">
    <property type="reaction ID" value="UER00064"/>
</dbReference>
<dbReference type="Proteomes" id="UP000002407">
    <property type="component" value="Chromosome"/>
</dbReference>
<dbReference type="GO" id="GO:0005737">
    <property type="term" value="C:cytoplasm"/>
    <property type="evidence" value="ECO:0007669"/>
    <property type="project" value="UniProtKB-SubCell"/>
</dbReference>
<dbReference type="GO" id="GO:0005524">
    <property type="term" value="F:ATP binding"/>
    <property type="evidence" value="ECO:0007669"/>
    <property type="project" value="UniProtKB-UniRule"/>
</dbReference>
<dbReference type="GO" id="GO:0004413">
    <property type="term" value="F:homoserine kinase activity"/>
    <property type="evidence" value="ECO:0007669"/>
    <property type="project" value="UniProtKB-UniRule"/>
</dbReference>
<dbReference type="GO" id="GO:0009088">
    <property type="term" value="P:threonine biosynthetic process"/>
    <property type="evidence" value="ECO:0007669"/>
    <property type="project" value="UniProtKB-UniRule"/>
</dbReference>
<dbReference type="Gene3D" id="3.30.230.10">
    <property type="match status" value="1"/>
</dbReference>
<dbReference type="Gene3D" id="3.30.70.890">
    <property type="entry name" value="GHMP kinase, C-terminal domain"/>
    <property type="match status" value="1"/>
</dbReference>
<dbReference type="HAMAP" id="MF_00384">
    <property type="entry name" value="Homoser_kinase"/>
    <property type="match status" value="1"/>
</dbReference>
<dbReference type="InterPro" id="IPR013750">
    <property type="entry name" value="GHMP_kinase_C_dom"/>
</dbReference>
<dbReference type="InterPro" id="IPR036554">
    <property type="entry name" value="GHMP_kinase_C_sf"/>
</dbReference>
<dbReference type="InterPro" id="IPR006204">
    <property type="entry name" value="GHMP_kinase_N_dom"/>
</dbReference>
<dbReference type="InterPro" id="IPR006203">
    <property type="entry name" value="GHMP_knse_ATP-bd_CS"/>
</dbReference>
<dbReference type="InterPro" id="IPR000870">
    <property type="entry name" value="Homoserine_kinase"/>
</dbReference>
<dbReference type="InterPro" id="IPR020568">
    <property type="entry name" value="Ribosomal_Su5_D2-typ_SF"/>
</dbReference>
<dbReference type="InterPro" id="IPR014721">
    <property type="entry name" value="Ribsml_uS5_D2-typ_fold_subgr"/>
</dbReference>
<dbReference type="NCBIfam" id="TIGR00191">
    <property type="entry name" value="thrB"/>
    <property type="match status" value="1"/>
</dbReference>
<dbReference type="PANTHER" id="PTHR20861:SF1">
    <property type="entry name" value="HOMOSERINE KINASE"/>
    <property type="match status" value="1"/>
</dbReference>
<dbReference type="PANTHER" id="PTHR20861">
    <property type="entry name" value="HOMOSERINE/4-DIPHOSPHOCYTIDYL-2-C-METHYL-D-ERYTHRITOL KINASE"/>
    <property type="match status" value="1"/>
</dbReference>
<dbReference type="Pfam" id="PF08544">
    <property type="entry name" value="GHMP_kinases_C"/>
    <property type="match status" value="1"/>
</dbReference>
<dbReference type="Pfam" id="PF00288">
    <property type="entry name" value="GHMP_kinases_N"/>
    <property type="match status" value="1"/>
</dbReference>
<dbReference type="PIRSF" id="PIRSF000676">
    <property type="entry name" value="Homoser_kin"/>
    <property type="match status" value="1"/>
</dbReference>
<dbReference type="PRINTS" id="PR00958">
    <property type="entry name" value="HOMSERKINASE"/>
</dbReference>
<dbReference type="SUPFAM" id="SSF55060">
    <property type="entry name" value="GHMP Kinase, C-terminal domain"/>
    <property type="match status" value="1"/>
</dbReference>
<dbReference type="SUPFAM" id="SSF54211">
    <property type="entry name" value="Ribosomal protein S5 domain 2-like"/>
    <property type="match status" value="1"/>
</dbReference>
<dbReference type="PROSITE" id="PS00627">
    <property type="entry name" value="GHMP_KINASES_ATP"/>
    <property type="match status" value="1"/>
</dbReference>
<keyword id="KW-0028">Amino-acid biosynthesis</keyword>
<keyword id="KW-0067">ATP-binding</keyword>
<keyword id="KW-0963">Cytoplasm</keyword>
<keyword id="KW-0418">Kinase</keyword>
<keyword id="KW-0547">Nucleotide-binding</keyword>
<keyword id="KW-1185">Reference proteome</keyword>
<keyword id="KW-0791">Threonine biosynthesis</keyword>
<keyword id="KW-0808">Transferase</keyword>
<comment type="function">
    <text evidence="1">Catalyzes the ATP-dependent phosphorylation of L-homoserine to L-homoserine phosphate.</text>
</comment>
<comment type="catalytic activity">
    <reaction evidence="1">
        <text>L-homoserine + ATP = O-phospho-L-homoserine + ADP + H(+)</text>
        <dbReference type="Rhea" id="RHEA:13985"/>
        <dbReference type="ChEBI" id="CHEBI:15378"/>
        <dbReference type="ChEBI" id="CHEBI:30616"/>
        <dbReference type="ChEBI" id="CHEBI:57476"/>
        <dbReference type="ChEBI" id="CHEBI:57590"/>
        <dbReference type="ChEBI" id="CHEBI:456216"/>
        <dbReference type="EC" id="2.7.1.39"/>
    </reaction>
</comment>
<comment type="pathway">
    <text evidence="1">Amino-acid biosynthesis; L-threonine biosynthesis; L-threonine from L-aspartate: step 4/5.</text>
</comment>
<comment type="subcellular location">
    <subcellularLocation>
        <location evidence="1">Cytoplasm</location>
    </subcellularLocation>
</comment>
<comment type="similarity">
    <text evidence="1">Belongs to the GHMP kinase family. Homoserine kinase subfamily.</text>
</comment>
<accession>A7I3V2</accession>
<name>KHSE_CAMHC</name>
<protein>
    <recommendedName>
        <fullName evidence="1">Homoserine kinase</fullName>
        <shortName evidence="1">HK</shortName>
        <shortName evidence="1">HSK</shortName>
        <ecNumber evidence="1">2.7.1.39</ecNumber>
    </recommendedName>
</protein>
<sequence>MVIKVPATSANLGPGFDALGLSLNLFNIITINESPIFCISLNGEGSQNLNLKKHNMFISIFNEITRKFDTKLPNFRFVFENNIPFSRGLGSSSAVIVGAIASAYKICGIKIDKNKILNEALVYENHPDNIAPAAFGGFVSSVIYKNSVITQKSEIGEDIKAVVVIPDKQMQTRKSRTMLPKNFTIKECVTNLSHAAFLTSCFVKKDYKNLKFGCIDVMHEELRMQNLPELFEVRKIAYENGALMSSLSGSGSSFLNIVYKDDAKNLAKILSAKFPKFTVKILDFDNGGFAFE</sequence>
<gene>
    <name evidence="1" type="primary">thrB</name>
    <name type="ordered locus">CHAB381_1681</name>
</gene>
<organism>
    <name type="scientific">Campylobacter hominis (strain ATCC BAA-381 / DSM 21671 / CCUG 45161 / LMG 19568 / NCTC 13146 / CH001A)</name>
    <dbReference type="NCBI Taxonomy" id="360107"/>
    <lineage>
        <taxon>Bacteria</taxon>
        <taxon>Pseudomonadati</taxon>
        <taxon>Campylobacterota</taxon>
        <taxon>Epsilonproteobacteria</taxon>
        <taxon>Campylobacterales</taxon>
        <taxon>Campylobacteraceae</taxon>
        <taxon>Campylobacter</taxon>
    </lineage>
</organism>
<evidence type="ECO:0000255" key="1">
    <source>
        <dbReference type="HAMAP-Rule" id="MF_00384"/>
    </source>
</evidence>
<proteinExistence type="inferred from homology"/>
<reference key="1">
    <citation type="submission" date="2007-07" db="EMBL/GenBank/DDBJ databases">
        <title>Complete genome sequence of Campylobacter hominis ATCC BAA-381, a commensal isolated from the human gastrointestinal tract.</title>
        <authorList>
            <person name="Fouts D.E."/>
            <person name="Mongodin E.F."/>
            <person name="Puiu D."/>
            <person name="Sebastian Y."/>
            <person name="Miller W.G."/>
            <person name="Mandrell R.E."/>
            <person name="Nelson K.E."/>
        </authorList>
    </citation>
    <scope>NUCLEOTIDE SEQUENCE [LARGE SCALE GENOMIC DNA]</scope>
    <source>
        <strain>ATCC BAA-381 / DSM 21671 / CCUG 45161 / LMG 19568 / NCTC 13146 / CH001A</strain>
    </source>
</reference>